<protein>
    <recommendedName>
        <fullName evidence="2">Homoserine O-succinyltransferase</fullName>
        <shortName evidence="2">HST</shortName>
        <ecNumber evidence="2">2.3.1.46</ecNumber>
    </recommendedName>
    <alternativeName>
        <fullName evidence="2">Homoserine transsuccinylase</fullName>
        <shortName evidence="2">HTS</shortName>
    </alternativeName>
</protein>
<proteinExistence type="inferred from homology"/>
<name>METAS_ECO57</name>
<evidence type="ECO:0000250" key="1"/>
<evidence type="ECO:0000255" key="2">
    <source>
        <dbReference type="HAMAP-Rule" id="MF_00295"/>
    </source>
</evidence>
<feature type="initiator methionine" description="Removed" evidence="1">
    <location>
        <position position="1"/>
    </location>
</feature>
<feature type="chain" id="PRO_0000199750" description="Homoserine O-succinyltransferase">
    <location>
        <begin position="2"/>
        <end position="309"/>
    </location>
</feature>
<feature type="active site" description="Acyl-thioester intermediate" evidence="2">
    <location>
        <position position="142"/>
    </location>
</feature>
<feature type="active site" description="Proton acceptor" evidence="2">
    <location>
        <position position="235"/>
    </location>
</feature>
<feature type="active site" evidence="2">
    <location>
        <position position="237"/>
    </location>
</feature>
<feature type="binding site" evidence="2">
    <location>
        <position position="163"/>
    </location>
    <ligand>
        <name>substrate</name>
    </ligand>
</feature>
<feature type="binding site" evidence="2">
    <location>
        <position position="192"/>
    </location>
    <ligand>
        <name>substrate</name>
    </ligand>
</feature>
<feature type="binding site" evidence="2">
    <location>
        <position position="249"/>
    </location>
    <ligand>
        <name>substrate</name>
    </ligand>
</feature>
<feature type="site" description="Important for acyl-CoA specificity" evidence="2">
    <location>
        <position position="111"/>
    </location>
</feature>
<feature type="site" description="Important for substrate specificity" evidence="2">
    <location>
        <position position="192"/>
    </location>
</feature>
<gene>
    <name evidence="2" type="primary">metAS</name>
    <name type="ordered locus">Z5599</name>
    <name type="ordered locus">ECs4931</name>
</gene>
<sequence length="309" mass="35784">MPIRVPDELPAVNFLREENVFVMTTSRASGQEIRPLKVLILNLMPKKIETENQFLRLLSNSPLQVDIQLLRIDSRESRNTPAEHLNNFYCNFEDIQEQNFDGLIVTGAPLGLVEFNDVAYWPQIKQVLEWSKDHVTSTLFVCWAVQAALNILYGIPKQTRTDKLSGVYEHHILHPHALLTRGFDDSFLAPHSRYADFPAALIRDYTDLEILAETEEGDAYLFASKDKRIAFVTGHPEYDAQTLAQEYFRDVEAGLDPEVPYNYFPHNDPQNKPRASWRSHGNLLFTNWLNYYVYQITPYDLRHMNPTLD</sequence>
<dbReference type="EC" id="2.3.1.46" evidence="2"/>
<dbReference type="EMBL" id="AE005174">
    <property type="protein sequence ID" value="AAG59205.1"/>
    <property type="molecule type" value="Genomic_DNA"/>
</dbReference>
<dbReference type="EMBL" id="BA000007">
    <property type="protein sequence ID" value="BAB38354.1"/>
    <property type="molecule type" value="Genomic_DNA"/>
</dbReference>
<dbReference type="PIR" id="A86093">
    <property type="entry name" value="A86093"/>
</dbReference>
<dbReference type="PIR" id="C91245">
    <property type="entry name" value="C91245"/>
</dbReference>
<dbReference type="SMR" id="Q8X610"/>
<dbReference type="STRING" id="155864.Z5599"/>
<dbReference type="DNASU" id="960117"/>
<dbReference type="KEGG" id="ece:Z5599"/>
<dbReference type="KEGG" id="ecs:ECs_4931"/>
<dbReference type="PATRIC" id="fig|386585.9.peg.5157"/>
<dbReference type="eggNOG" id="COG1897">
    <property type="taxonomic scope" value="Bacteria"/>
</dbReference>
<dbReference type="HOGENOM" id="CLU_057851_0_1_6"/>
<dbReference type="OMA" id="CSCLATH"/>
<dbReference type="UniPathway" id="UPA00051">
    <property type="reaction ID" value="UER00075"/>
</dbReference>
<dbReference type="Proteomes" id="UP000000558">
    <property type="component" value="Chromosome"/>
</dbReference>
<dbReference type="Proteomes" id="UP000002519">
    <property type="component" value="Chromosome"/>
</dbReference>
<dbReference type="GO" id="GO:0005737">
    <property type="term" value="C:cytoplasm"/>
    <property type="evidence" value="ECO:0007669"/>
    <property type="project" value="UniProtKB-SubCell"/>
</dbReference>
<dbReference type="GO" id="GO:0004414">
    <property type="term" value="F:homoserine O-acetyltransferase activity"/>
    <property type="evidence" value="ECO:0007669"/>
    <property type="project" value="UniProtKB-UniRule"/>
</dbReference>
<dbReference type="GO" id="GO:0008899">
    <property type="term" value="F:homoserine O-succinyltransferase activity"/>
    <property type="evidence" value="ECO:0007669"/>
    <property type="project" value="UniProtKB-EC"/>
</dbReference>
<dbReference type="GO" id="GO:0019281">
    <property type="term" value="P:L-methionine biosynthetic process from homoserine via O-succinyl-L-homoserine and cystathionine"/>
    <property type="evidence" value="ECO:0007669"/>
    <property type="project" value="InterPro"/>
</dbReference>
<dbReference type="CDD" id="cd03131">
    <property type="entry name" value="GATase1_HTS"/>
    <property type="match status" value="1"/>
</dbReference>
<dbReference type="FunFam" id="3.40.50.880:FF:000004">
    <property type="entry name" value="Homoserine O-succinyltransferase"/>
    <property type="match status" value="1"/>
</dbReference>
<dbReference type="Gene3D" id="3.40.50.880">
    <property type="match status" value="1"/>
</dbReference>
<dbReference type="HAMAP" id="MF_00295">
    <property type="entry name" value="MetA_acyltransf"/>
    <property type="match status" value="1"/>
</dbReference>
<dbReference type="InterPro" id="IPR029062">
    <property type="entry name" value="Class_I_gatase-like"/>
</dbReference>
<dbReference type="InterPro" id="IPR005697">
    <property type="entry name" value="HST_MetA"/>
</dbReference>
<dbReference type="InterPro" id="IPR033752">
    <property type="entry name" value="MetA_family"/>
</dbReference>
<dbReference type="NCBIfam" id="TIGR01001">
    <property type="entry name" value="metA"/>
    <property type="match status" value="1"/>
</dbReference>
<dbReference type="PANTHER" id="PTHR20919">
    <property type="entry name" value="HOMOSERINE O-SUCCINYLTRANSFERASE"/>
    <property type="match status" value="1"/>
</dbReference>
<dbReference type="PANTHER" id="PTHR20919:SF0">
    <property type="entry name" value="HOMOSERINE O-SUCCINYLTRANSFERASE"/>
    <property type="match status" value="1"/>
</dbReference>
<dbReference type="Pfam" id="PF04204">
    <property type="entry name" value="HTS"/>
    <property type="match status" value="1"/>
</dbReference>
<dbReference type="PIRSF" id="PIRSF000450">
    <property type="entry name" value="H_ser_succinyltr"/>
    <property type="match status" value="1"/>
</dbReference>
<dbReference type="SUPFAM" id="SSF52317">
    <property type="entry name" value="Class I glutamine amidotransferase-like"/>
    <property type="match status" value="1"/>
</dbReference>
<keyword id="KW-0012">Acyltransferase</keyword>
<keyword id="KW-0028">Amino-acid biosynthesis</keyword>
<keyword id="KW-0963">Cytoplasm</keyword>
<keyword id="KW-0486">Methionine biosynthesis</keyword>
<keyword id="KW-1185">Reference proteome</keyword>
<keyword id="KW-0808">Transferase</keyword>
<accession>Q8X610</accession>
<reference key="1">
    <citation type="journal article" date="2001" name="Nature">
        <title>Genome sequence of enterohaemorrhagic Escherichia coli O157:H7.</title>
        <authorList>
            <person name="Perna N.T."/>
            <person name="Plunkett G. III"/>
            <person name="Burland V."/>
            <person name="Mau B."/>
            <person name="Glasner J.D."/>
            <person name="Rose D.J."/>
            <person name="Mayhew G.F."/>
            <person name="Evans P.S."/>
            <person name="Gregor J."/>
            <person name="Kirkpatrick H.A."/>
            <person name="Posfai G."/>
            <person name="Hackett J."/>
            <person name="Klink S."/>
            <person name="Boutin A."/>
            <person name="Shao Y."/>
            <person name="Miller L."/>
            <person name="Grotbeck E.J."/>
            <person name="Davis N.W."/>
            <person name="Lim A."/>
            <person name="Dimalanta E.T."/>
            <person name="Potamousis K."/>
            <person name="Apodaca J."/>
            <person name="Anantharaman T.S."/>
            <person name="Lin J."/>
            <person name="Yen G."/>
            <person name="Schwartz D.C."/>
            <person name="Welch R.A."/>
            <person name="Blattner F.R."/>
        </authorList>
    </citation>
    <scope>NUCLEOTIDE SEQUENCE [LARGE SCALE GENOMIC DNA]</scope>
    <source>
        <strain>O157:H7 / EDL933 / ATCC 700927 / EHEC</strain>
    </source>
</reference>
<reference key="2">
    <citation type="journal article" date="2001" name="DNA Res.">
        <title>Complete genome sequence of enterohemorrhagic Escherichia coli O157:H7 and genomic comparison with a laboratory strain K-12.</title>
        <authorList>
            <person name="Hayashi T."/>
            <person name="Makino K."/>
            <person name="Ohnishi M."/>
            <person name="Kurokawa K."/>
            <person name="Ishii K."/>
            <person name="Yokoyama K."/>
            <person name="Han C.-G."/>
            <person name="Ohtsubo E."/>
            <person name="Nakayama K."/>
            <person name="Murata T."/>
            <person name="Tanaka M."/>
            <person name="Tobe T."/>
            <person name="Iida T."/>
            <person name="Takami H."/>
            <person name="Honda T."/>
            <person name="Sasakawa C."/>
            <person name="Ogasawara N."/>
            <person name="Yasunaga T."/>
            <person name="Kuhara S."/>
            <person name="Shiba T."/>
            <person name="Hattori M."/>
            <person name="Shinagawa H."/>
        </authorList>
    </citation>
    <scope>NUCLEOTIDE SEQUENCE [LARGE SCALE GENOMIC DNA]</scope>
    <source>
        <strain>O157:H7 / Sakai / RIMD 0509952 / EHEC</strain>
    </source>
</reference>
<organism>
    <name type="scientific">Escherichia coli O157:H7</name>
    <dbReference type="NCBI Taxonomy" id="83334"/>
    <lineage>
        <taxon>Bacteria</taxon>
        <taxon>Pseudomonadati</taxon>
        <taxon>Pseudomonadota</taxon>
        <taxon>Gammaproteobacteria</taxon>
        <taxon>Enterobacterales</taxon>
        <taxon>Enterobacteriaceae</taxon>
        <taxon>Escherichia</taxon>
    </lineage>
</organism>
<comment type="function">
    <text evidence="2">Transfers a succinyl group from succinyl-CoA to L-homoserine, forming succinyl-L-homoserine.</text>
</comment>
<comment type="catalytic activity">
    <reaction evidence="2">
        <text>L-homoserine + succinyl-CoA = O-succinyl-L-homoserine + CoA</text>
        <dbReference type="Rhea" id="RHEA:22008"/>
        <dbReference type="ChEBI" id="CHEBI:57287"/>
        <dbReference type="ChEBI" id="CHEBI:57292"/>
        <dbReference type="ChEBI" id="CHEBI:57476"/>
        <dbReference type="ChEBI" id="CHEBI:57661"/>
        <dbReference type="EC" id="2.3.1.46"/>
    </reaction>
</comment>
<comment type="pathway">
    <text evidence="2">Amino-acid biosynthesis; L-methionine biosynthesis via de novo pathway; O-succinyl-L-homoserine from L-homoserine: step 1/1.</text>
</comment>
<comment type="subunit">
    <text evidence="2">Homodimer.</text>
</comment>
<comment type="subcellular location">
    <subcellularLocation>
        <location evidence="2">Cytoplasm</location>
    </subcellularLocation>
</comment>
<comment type="similarity">
    <text evidence="2">Belongs to the MetA family.</text>
</comment>